<evidence type="ECO:0000255" key="1">
    <source>
        <dbReference type="HAMAP-Rule" id="MF_00621"/>
    </source>
</evidence>
<name>CODY_STRZJ</name>
<sequence>MAHLLEKTRKITSILKRSEEQLQDELPYNAITRQLADIIHCNACIINSKGRLLGYFMRYKTNTDRVEQFFQTKIFPDDYVQGANMIYETEANLPVEHDMSIFPVESRDDFPDGLTTIAPIHVSGIRLGSLIIWRNDKKFEDEDLVLVEIASTVVGIQLLNFQREEDEKNIRRRTAVTMAVNTLSYSELRAVSAILGELNGNEGKLTASVIADRIGITRSVIVNALRKLESAGIIESRSLGMKGTYLKVLISDIFEEVKKRDY</sequence>
<reference key="1">
    <citation type="journal article" date="2010" name="Genome Biol.">
        <title>Structure and dynamics of the pan-genome of Streptococcus pneumoniae and closely related species.</title>
        <authorList>
            <person name="Donati C."/>
            <person name="Hiller N.L."/>
            <person name="Tettelin H."/>
            <person name="Muzzi A."/>
            <person name="Croucher N.J."/>
            <person name="Angiuoli S.V."/>
            <person name="Oggioni M."/>
            <person name="Dunning Hotopp J.C."/>
            <person name="Hu F.Z."/>
            <person name="Riley D.R."/>
            <person name="Covacci A."/>
            <person name="Mitchell T.J."/>
            <person name="Bentley S.D."/>
            <person name="Kilian M."/>
            <person name="Ehrlich G.D."/>
            <person name="Rappuoli R."/>
            <person name="Moxon E.R."/>
            <person name="Masignani V."/>
        </authorList>
    </citation>
    <scope>NUCLEOTIDE SEQUENCE [LARGE SCALE GENOMIC DNA]</scope>
    <source>
        <strain>JJA</strain>
    </source>
</reference>
<proteinExistence type="inferred from homology"/>
<gene>
    <name evidence="1" type="primary">codY</name>
    <name type="ordered locus">SPJ_1490</name>
</gene>
<feature type="chain" id="PRO_1000147212" description="Global transcriptional regulator CodY">
    <location>
        <begin position="1"/>
        <end position="262"/>
    </location>
</feature>
<feature type="DNA-binding region" description="H-T-H motif" evidence="1">
    <location>
        <begin position="207"/>
        <end position="226"/>
    </location>
</feature>
<feature type="region of interest" description="GAF domain" evidence="1">
    <location>
        <begin position="1"/>
        <end position="159"/>
    </location>
</feature>
<protein>
    <recommendedName>
        <fullName evidence="1">Global transcriptional regulator CodY</fullName>
    </recommendedName>
</protein>
<comment type="function">
    <text evidence="1">DNA-binding global transcriptional regulator which is involved in the adaptive response to starvation and acts by directly or indirectly controlling the expression of numerous genes in response to nutrient availability. During rapid exponential growth, CodY is highly active and represses genes whose products allow adaptation to nutrient depletion.</text>
</comment>
<comment type="subcellular location">
    <subcellularLocation>
        <location evidence="1">Cytoplasm</location>
    </subcellularLocation>
</comment>
<comment type="similarity">
    <text evidence="1">Belongs to the CodY family.</text>
</comment>
<keyword id="KW-0963">Cytoplasm</keyword>
<keyword id="KW-0238">DNA-binding</keyword>
<keyword id="KW-0678">Repressor</keyword>
<keyword id="KW-0804">Transcription</keyword>
<keyword id="KW-0805">Transcription regulation</keyword>
<dbReference type="EMBL" id="CP000919">
    <property type="protein sequence ID" value="ACO18042.1"/>
    <property type="molecule type" value="Genomic_DNA"/>
</dbReference>
<dbReference type="RefSeq" id="WP_000940733.1">
    <property type="nucleotide sequence ID" value="NC_012466.1"/>
</dbReference>
<dbReference type="SMR" id="C1CFG6"/>
<dbReference type="GeneID" id="45653181"/>
<dbReference type="KEGG" id="sjj:SPJ_1490"/>
<dbReference type="HOGENOM" id="CLU_089581_0_0_9"/>
<dbReference type="Proteomes" id="UP000002206">
    <property type="component" value="Chromosome"/>
</dbReference>
<dbReference type="GO" id="GO:0005737">
    <property type="term" value="C:cytoplasm"/>
    <property type="evidence" value="ECO:0007669"/>
    <property type="project" value="UniProtKB-SubCell"/>
</dbReference>
<dbReference type="GO" id="GO:0003677">
    <property type="term" value="F:DNA binding"/>
    <property type="evidence" value="ECO:0007669"/>
    <property type="project" value="UniProtKB-UniRule"/>
</dbReference>
<dbReference type="GO" id="GO:0003700">
    <property type="term" value="F:DNA-binding transcription factor activity"/>
    <property type="evidence" value="ECO:0007669"/>
    <property type="project" value="InterPro"/>
</dbReference>
<dbReference type="GO" id="GO:0005525">
    <property type="term" value="F:GTP binding"/>
    <property type="evidence" value="ECO:0007669"/>
    <property type="project" value="InterPro"/>
</dbReference>
<dbReference type="GO" id="GO:0045892">
    <property type="term" value="P:negative regulation of DNA-templated transcription"/>
    <property type="evidence" value="ECO:0007669"/>
    <property type="project" value="UniProtKB-UniRule"/>
</dbReference>
<dbReference type="CDD" id="cd00090">
    <property type="entry name" value="HTH_ARSR"/>
    <property type="match status" value="1"/>
</dbReference>
<dbReference type="FunFam" id="1.10.10.10:FF:000034">
    <property type="entry name" value="GTP-sensing transcriptional pleiotropic repressor CodY"/>
    <property type="match status" value="1"/>
</dbReference>
<dbReference type="FunFam" id="3.30.450.40:FF:000003">
    <property type="entry name" value="GTP-sensing transcriptional pleiotropic repressor CodY"/>
    <property type="match status" value="1"/>
</dbReference>
<dbReference type="Gene3D" id="3.30.450.40">
    <property type="match status" value="1"/>
</dbReference>
<dbReference type="Gene3D" id="1.10.10.10">
    <property type="entry name" value="Winged helix-like DNA-binding domain superfamily/Winged helix DNA-binding domain"/>
    <property type="match status" value="1"/>
</dbReference>
<dbReference type="HAMAP" id="MF_00621">
    <property type="entry name" value="HTH_type_CodY"/>
    <property type="match status" value="1"/>
</dbReference>
<dbReference type="InterPro" id="IPR011991">
    <property type="entry name" value="ArsR-like_HTH"/>
</dbReference>
<dbReference type="InterPro" id="IPR014154">
    <property type="entry name" value="CodY"/>
</dbReference>
<dbReference type="InterPro" id="IPR029016">
    <property type="entry name" value="GAF-like_dom_sf"/>
</dbReference>
<dbReference type="InterPro" id="IPR013198">
    <property type="entry name" value="GTP_trans_reg_CodY_C"/>
</dbReference>
<dbReference type="InterPro" id="IPR010312">
    <property type="entry name" value="Transc_reg_CodY_N"/>
</dbReference>
<dbReference type="InterPro" id="IPR036388">
    <property type="entry name" value="WH-like_DNA-bd_sf"/>
</dbReference>
<dbReference type="InterPro" id="IPR036390">
    <property type="entry name" value="WH_DNA-bd_sf"/>
</dbReference>
<dbReference type="NCBIfam" id="TIGR02787">
    <property type="entry name" value="codY_Gpos"/>
    <property type="match status" value="1"/>
</dbReference>
<dbReference type="NCBIfam" id="NF003170">
    <property type="entry name" value="PRK04158.1"/>
    <property type="match status" value="1"/>
</dbReference>
<dbReference type="PANTHER" id="PTHR40062:SF1">
    <property type="entry name" value="GLOBAL TRANSCRIPTIONAL REGULATOR CODY"/>
    <property type="match status" value="1"/>
</dbReference>
<dbReference type="PANTHER" id="PTHR40062">
    <property type="entry name" value="GTP-SENSING TRANSCRIPTIONAL PLEIOTROPIC REPRESSOR CODY"/>
    <property type="match status" value="1"/>
</dbReference>
<dbReference type="Pfam" id="PF06018">
    <property type="entry name" value="CodY"/>
    <property type="match status" value="1"/>
</dbReference>
<dbReference type="Pfam" id="PF08222">
    <property type="entry name" value="HTH_CodY"/>
    <property type="match status" value="1"/>
</dbReference>
<dbReference type="PIRSF" id="PIRSF011572">
    <property type="entry name" value="GTP_sensing_CodY"/>
    <property type="match status" value="1"/>
</dbReference>
<dbReference type="SUPFAM" id="SSF46785">
    <property type="entry name" value="Winged helix' DNA-binding domain"/>
    <property type="match status" value="1"/>
</dbReference>
<accession>C1CFG6</accession>
<organism>
    <name type="scientific">Streptococcus pneumoniae (strain JJA)</name>
    <dbReference type="NCBI Taxonomy" id="488222"/>
    <lineage>
        <taxon>Bacteria</taxon>
        <taxon>Bacillati</taxon>
        <taxon>Bacillota</taxon>
        <taxon>Bacilli</taxon>
        <taxon>Lactobacillales</taxon>
        <taxon>Streptococcaceae</taxon>
        <taxon>Streptococcus</taxon>
    </lineage>
</organism>